<proteinExistence type="inferred from homology"/>
<feature type="chain" id="PRO_0000175043" description="Thymidine kinase">
    <location>
        <begin position="1"/>
        <end position="192"/>
    </location>
</feature>
<feature type="active site" description="Proton acceptor" evidence="1">
    <location>
        <position position="88"/>
    </location>
</feature>
<feature type="binding site" evidence="1">
    <location>
        <begin position="9"/>
        <end position="16"/>
    </location>
    <ligand>
        <name>ATP</name>
        <dbReference type="ChEBI" id="CHEBI:30616"/>
    </ligand>
</feature>
<feature type="binding site" evidence="1">
    <location>
        <begin position="87"/>
        <end position="90"/>
    </location>
    <ligand>
        <name>ATP</name>
        <dbReference type="ChEBI" id="CHEBI:30616"/>
    </ligand>
</feature>
<feature type="binding site" evidence="1">
    <location>
        <position position="145"/>
    </location>
    <ligand>
        <name>Zn(2+)</name>
        <dbReference type="ChEBI" id="CHEBI:29105"/>
    </ligand>
</feature>
<feature type="binding site" evidence="1">
    <location>
        <position position="147"/>
    </location>
    <ligand>
        <name>Zn(2+)</name>
        <dbReference type="ChEBI" id="CHEBI:29105"/>
    </ligand>
</feature>
<feature type="binding site" evidence="1">
    <location>
        <position position="182"/>
    </location>
    <ligand>
        <name>Zn(2+)</name>
        <dbReference type="ChEBI" id="CHEBI:29105"/>
    </ligand>
</feature>
<feature type="binding site" evidence="1">
    <location>
        <position position="185"/>
    </location>
    <ligand>
        <name>Zn(2+)</name>
        <dbReference type="ChEBI" id="CHEBI:29105"/>
    </ligand>
</feature>
<protein>
    <recommendedName>
        <fullName evidence="1">Thymidine kinase</fullName>
        <ecNumber evidence="1">2.7.1.21</ecNumber>
    </recommendedName>
</protein>
<evidence type="ECO:0000255" key="1">
    <source>
        <dbReference type="HAMAP-Rule" id="MF_00124"/>
    </source>
</evidence>
<gene>
    <name evidence="1" type="primary">tdk</name>
    <name type="ordered locus">VC_1167</name>
</gene>
<sequence>MAQMYFYYSAMNAGKSTTLLQSAFNYQERGMNPLIFTAAIDDRFGVGKVSSRIGLEAEAHLFHADTDLLHVIATLHEAEPRHCILMDECQFLSKEQVYQLTEVVDKLDIPVLCYGLRTDFLGELFEGSKYLLSWADKLIELKTICHCGRKANMVIRTDEHGNAISEGDQVAIGGNDKYVSVCRQHYKEALGR</sequence>
<name>KITH_VIBCH</name>
<accession>Q9KST9</accession>
<dbReference type="EC" id="2.7.1.21" evidence="1"/>
<dbReference type="EMBL" id="AE003852">
    <property type="protein sequence ID" value="AAF94326.1"/>
    <property type="molecule type" value="Genomic_DNA"/>
</dbReference>
<dbReference type="PIR" id="B82232">
    <property type="entry name" value="B82232"/>
</dbReference>
<dbReference type="RefSeq" id="NP_230812.1">
    <property type="nucleotide sequence ID" value="NC_002505.1"/>
</dbReference>
<dbReference type="RefSeq" id="WP_001880948.1">
    <property type="nucleotide sequence ID" value="NZ_LT906614.1"/>
</dbReference>
<dbReference type="SMR" id="Q9KST9"/>
<dbReference type="STRING" id="243277.VC_1167"/>
<dbReference type="DNASU" id="2614600"/>
<dbReference type="EnsemblBacteria" id="AAF94326">
    <property type="protein sequence ID" value="AAF94326"/>
    <property type="gene ID" value="VC_1167"/>
</dbReference>
<dbReference type="KEGG" id="vch:VC_1167"/>
<dbReference type="PATRIC" id="fig|243277.26.peg.1116"/>
<dbReference type="eggNOG" id="COG1435">
    <property type="taxonomic scope" value="Bacteria"/>
</dbReference>
<dbReference type="HOGENOM" id="CLU_064400_2_1_6"/>
<dbReference type="Proteomes" id="UP000000584">
    <property type="component" value="Chromosome 1"/>
</dbReference>
<dbReference type="GO" id="GO:0005829">
    <property type="term" value="C:cytosol"/>
    <property type="evidence" value="ECO:0000318"/>
    <property type="project" value="GO_Central"/>
</dbReference>
<dbReference type="GO" id="GO:0005524">
    <property type="term" value="F:ATP binding"/>
    <property type="evidence" value="ECO:0007669"/>
    <property type="project" value="UniProtKB-UniRule"/>
</dbReference>
<dbReference type="GO" id="GO:0004797">
    <property type="term" value="F:thymidine kinase activity"/>
    <property type="evidence" value="ECO:0000318"/>
    <property type="project" value="GO_Central"/>
</dbReference>
<dbReference type="GO" id="GO:0008270">
    <property type="term" value="F:zinc ion binding"/>
    <property type="evidence" value="ECO:0007669"/>
    <property type="project" value="UniProtKB-UniRule"/>
</dbReference>
<dbReference type="GO" id="GO:0071897">
    <property type="term" value="P:DNA biosynthetic process"/>
    <property type="evidence" value="ECO:0007669"/>
    <property type="project" value="UniProtKB-KW"/>
</dbReference>
<dbReference type="GO" id="GO:0046104">
    <property type="term" value="P:thymidine metabolic process"/>
    <property type="evidence" value="ECO:0000318"/>
    <property type="project" value="GO_Central"/>
</dbReference>
<dbReference type="FunFam" id="3.30.60.20:FF:000017">
    <property type="entry name" value="Thymidine kinase"/>
    <property type="match status" value="1"/>
</dbReference>
<dbReference type="FunFam" id="3.40.50.300:FF:000323">
    <property type="entry name" value="Thymidine kinase"/>
    <property type="match status" value="1"/>
</dbReference>
<dbReference type="Gene3D" id="3.30.60.20">
    <property type="match status" value="1"/>
</dbReference>
<dbReference type="Gene3D" id="3.40.50.300">
    <property type="entry name" value="P-loop containing nucleotide triphosphate hydrolases"/>
    <property type="match status" value="1"/>
</dbReference>
<dbReference type="HAMAP" id="MF_00124">
    <property type="entry name" value="Thymidine_kinase"/>
    <property type="match status" value="1"/>
</dbReference>
<dbReference type="InterPro" id="IPR027417">
    <property type="entry name" value="P-loop_NTPase"/>
</dbReference>
<dbReference type="InterPro" id="IPR001267">
    <property type="entry name" value="Thymidine_kinase"/>
</dbReference>
<dbReference type="InterPro" id="IPR020633">
    <property type="entry name" value="Thymidine_kinase_CS"/>
</dbReference>
<dbReference type="NCBIfam" id="NF003300">
    <property type="entry name" value="PRK04296.1-5"/>
    <property type="match status" value="1"/>
</dbReference>
<dbReference type="PANTHER" id="PTHR11441">
    <property type="entry name" value="THYMIDINE KINASE"/>
    <property type="match status" value="1"/>
</dbReference>
<dbReference type="PANTHER" id="PTHR11441:SF0">
    <property type="entry name" value="THYMIDINE KINASE, CYTOSOLIC"/>
    <property type="match status" value="1"/>
</dbReference>
<dbReference type="Pfam" id="PF00265">
    <property type="entry name" value="TK"/>
    <property type="match status" value="1"/>
</dbReference>
<dbReference type="PIRSF" id="PIRSF035805">
    <property type="entry name" value="TK_cell"/>
    <property type="match status" value="1"/>
</dbReference>
<dbReference type="SUPFAM" id="SSF57716">
    <property type="entry name" value="Glucocorticoid receptor-like (DNA-binding domain)"/>
    <property type="match status" value="1"/>
</dbReference>
<dbReference type="SUPFAM" id="SSF52540">
    <property type="entry name" value="P-loop containing nucleoside triphosphate hydrolases"/>
    <property type="match status" value="1"/>
</dbReference>
<dbReference type="PROSITE" id="PS00603">
    <property type="entry name" value="TK_CELLULAR_TYPE"/>
    <property type="match status" value="1"/>
</dbReference>
<reference key="1">
    <citation type="journal article" date="2000" name="Nature">
        <title>DNA sequence of both chromosomes of the cholera pathogen Vibrio cholerae.</title>
        <authorList>
            <person name="Heidelberg J.F."/>
            <person name="Eisen J.A."/>
            <person name="Nelson W.C."/>
            <person name="Clayton R.A."/>
            <person name="Gwinn M.L."/>
            <person name="Dodson R.J."/>
            <person name="Haft D.H."/>
            <person name="Hickey E.K."/>
            <person name="Peterson J.D."/>
            <person name="Umayam L.A."/>
            <person name="Gill S.R."/>
            <person name="Nelson K.E."/>
            <person name="Read T.D."/>
            <person name="Tettelin H."/>
            <person name="Richardson D.L."/>
            <person name="Ermolaeva M.D."/>
            <person name="Vamathevan J.J."/>
            <person name="Bass S."/>
            <person name="Qin H."/>
            <person name="Dragoi I."/>
            <person name="Sellers P."/>
            <person name="McDonald L.A."/>
            <person name="Utterback T.R."/>
            <person name="Fleischmann R.D."/>
            <person name="Nierman W.C."/>
            <person name="White O."/>
            <person name="Salzberg S.L."/>
            <person name="Smith H.O."/>
            <person name="Colwell R.R."/>
            <person name="Mekalanos J.J."/>
            <person name="Venter J.C."/>
            <person name="Fraser C.M."/>
        </authorList>
    </citation>
    <scope>NUCLEOTIDE SEQUENCE [LARGE SCALE GENOMIC DNA]</scope>
    <source>
        <strain>ATCC 39315 / El Tor Inaba N16961</strain>
    </source>
</reference>
<organism>
    <name type="scientific">Vibrio cholerae serotype O1 (strain ATCC 39315 / El Tor Inaba N16961)</name>
    <dbReference type="NCBI Taxonomy" id="243277"/>
    <lineage>
        <taxon>Bacteria</taxon>
        <taxon>Pseudomonadati</taxon>
        <taxon>Pseudomonadota</taxon>
        <taxon>Gammaproteobacteria</taxon>
        <taxon>Vibrionales</taxon>
        <taxon>Vibrionaceae</taxon>
        <taxon>Vibrio</taxon>
    </lineage>
</organism>
<keyword id="KW-0067">ATP-binding</keyword>
<keyword id="KW-0963">Cytoplasm</keyword>
<keyword id="KW-0237">DNA synthesis</keyword>
<keyword id="KW-0418">Kinase</keyword>
<keyword id="KW-0479">Metal-binding</keyword>
<keyword id="KW-0547">Nucleotide-binding</keyword>
<keyword id="KW-1185">Reference proteome</keyword>
<keyword id="KW-0808">Transferase</keyword>
<keyword id="KW-0862">Zinc</keyword>
<comment type="catalytic activity">
    <reaction evidence="1">
        <text>thymidine + ATP = dTMP + ADP + H(+)</text>
        <dbReference type="Rhea" id="RHEA:19129"/>
        <dbReference type="ChEBI" id="CHEBI:15378"/>
        <dbReference type="ChEBI" id="CHEBI:17748"/>
        <dbReference type="ChEBI" id="CHEBI:30616"/>
        <dbReference type="ChEBI" id="CHEBI:63528"/>
        <dbReference type="ChEBI" id="CHEBI:456216"/>
        <dbReference type="EC" id="2.7.1.21"/>
    </reaction>
</comment>
<comment type="subunit">
    <text evidence="1">Homotetramer.</text>
</comment>
<comment type="subcellular location">
    <subcellularLocation>
        <location evidence="1">Cytoplasm</location>
    </subcellularLocation>
</comment>
<comment type="similarity">
    <text evidence="1">Belongs to the thymidine kinase family.</text>
</comment>